<accession>C3LIY8</accession>
<reference key="1">
    <citation type="submission" date="2008-10" db="EMBL/GenBank/DDBJ databases">
        <title>Genome sequence of Bacillus anthracis str. CDC 684.</title>
        <authorList>
            <person name="Dodson R.J."/>
            <person name="Munk A.C."/>
            <person name="Brettin T."/>
            <person name="Bruce D."/>
            <person name="Detter C."/>
            <person name="Tapia R."/>
            <person name="Han C."/>
            <person name="Sutton G."/>
            <person name="Sims D."/>
        </authorList>
    </citation>
    <scope>NUCLEOTIDE SEQUENCE [LARGE SCALE GENOMIC DNA]</scope>
    <source>
        <strain>CDC 684 / NRRL 3495</strain>
    </source>
</reference>
<dbReference type="EC" id="4.3.3.6" evidence="1"/>
<dbReference type="EC" id="3.5.1.2" evidence="1"/>
<dbReference type="EMBL" id="CP001215">
    <property type="protein sequence ID" value="ACP17328.1"/>
    <property type="molecule type" value="Genomic_DNA"/>
</dbReference>
<dbReference type="RefSeq" id="WP_000238798.1">
    <property type="nucleotide sequence ID" value="NC_012581.1"/>
</dbReference>
<dbReference type="SMR" id="C3LIY8"/>
<dbReference type="GeneID" id="45020050"/>
<dbReference type="KEGG" id="bah:BAMEG_0017"/>
<dbReference type="HOGENOM" id="CLU_069674_2_0_9"/>
<dbReference type="UniPathway" id="UPA00245"/>
<dbReference type="GO" id="GO:0005829">
    <property type="term" value="C:cytosol"/>
    <property type="evidence" value="ECO:0007669"/>
    <property type="project" value="TreeGrafter"/>
</dbReference>
<dbReference type="GO" id="GO:1903600">
    <property type="term" value="C:glutaminase complex"/>
    <property type="evidence" value="ECO:0007669"/>
    <property type="project" value="TreeGrafter"/>
</dbReference>
<dbReference type="GO" id="GO:0004359">
    <property type="term" value="F:glutaminase activity"/>
    <property type="evidence" value="ECO:0007669"/>
    <property type="project" value="UniProtKB-UniRule"/>
</dbReference>
<dbReference type="GO" id="GO:0036381">
    <property type="term" value="F:pyridoxal 5'-phosphate synthase (glutamine hydrolysing) activity"/>
    <property type="evidence" value="ECO:0007669"/>
    <property type="project" value="UniProtKB-UniRule"/>
</dbReference>
<dbReference type="GO" id="GO:0006543">
    <property type="term" value="P:glutamine catabolic process"/>
    <property type="evidence" value="ECO:0007669"/>
    <property type="project" value="UniProtKB-UniRule"/>
</dbReference>
<dbReference type="GO" id="GO:0042823">
    <property type="term" value="P:pyridoxal phosphate biosynthetic process"/>
    <property type="evidence" value="ECO:0007669"/>
    <property type="project" value="UniProtKB-UniRule"/>
</dbReference>
<dbReference type="GO" id="GO:0008614">
    <property type="term" value="P:pyridoxine metabolic process"/>
    <property type="evidence" value="ECO:0007669"/>
    <property type="project" value="TreeGrafter"/>
</dbReference>
<dbReference type="CDD" id="cd01749">
    <property type="entry name" value="GATase1_PB"/>
    <property type="match status" value="1"/>
</dbReference>
<dbReference type="FunFam" id="3.40.50.880:FF:000010">
    <property type="entry name" value="uncharacterized protein LOC100176842 isoform X2"/>
    <property type="match status" value="1"/>
</dbReference>
<dbReference type="Gene3D" id="3.40.50.880">
    <property type="match status" value="1"/>
</dbReference>
<dbReference type="HAMAP" id="MF_01615">
    <property type="entry name" value="PdxT"/>
    <property type="match status" value="1"/>
</dbReference>
<dbReference type="InterPro" id="IPR029062">
    <property type="entry name" value="Class_I_gatase-like"/>
</dbReference>
<dbReference type="InterPro" id="IPR002161">
    <property type="entry name" value="PdxT/SNO"/>
</dbReference>
<dbReference type="InterPro" id="IPR021196">
    <property type="entry name" value="PdxT/SNO_CS"/>
</dbReference>
<dbReference type="NCBIfam" id="TIGR03800">
    <property type="entry name" value="PLP_synth_Pdx2"/>
    <property type="match status" value="1"/>
</dbReference>
<dbReference type="PANTHER" id="PTHR31559">
    <property type="entry name" value="PYRIDOXAL 5'-PHOSPHATE SYNTHASE SUBUNIT SNO"/>
    <property type="match status" value="1"/>
</dbReference>
<dbReference type="PANTHER" id="PTHR31559:SF0">
    <property type="entry name" value="PYRIDOXAL 5'-PHOSPHATE SYNTHASE SUBUNIT SNO1-RELATED"/>
    <property type="match status" value="1"/>
</dbReference>
<dbReference type="Pfam" id="PF01174">
    <property type="entry name" value="SNO"/>
    <property type="match status" value="1"/>
</dbReference>
<dbReference type="PIRSF" id="PIRSF005639">
    <property type="entry name" value="Glut_amidoT_SNO"/>
    <property type="match status" value="1"/>
</dbReference>
<dbReference type="SUPFAM" id="SSF52317">
    <property type="entry name" value="Class I glutamine amidotransferase-like"/>
    <property type="match status" value="1"/>
</dbReference>
<dbReference type="PROSITE" id="PS01236">
    <property type="entry name" value="PDXT_SNO_1"/>
    <property type="match status" value="1"/>
</dbReference>
<dbReference type="PROSITE" id="PS51130">
    <property type="entry name" value="PDXT_SNO_2"/>
    <property type="match status" value="1"/>
</dbReference>
<keyword id="KW-0315">Glutamine amidotransferase</keyword>
<keyword id="KW-0378">Hydrolase</keyword>
<keyword id="KW-0456">Lyase</keyword>
<keyword id="KW-0663">Pyridoxal phosphate</keyword>
<gene>
    <name evidence="1" type="primary">pdxT</name>
    <name type="ordered locus">BAMEG_0017</name>
</gene>
<protein>
    <recommendedName>
        <fullName evidence="1">Pyridoxal 5'-phosphate synthase subunit PdxT</fullName>
        <ecNumber evidence="1">4.3.3.6</ecNumber>
    </recommendedName>
    <alternativeName>
        <fullName evidence="1">Pdx2</fullName>
    </alternativeName>
    <alternativeName>
        <fullName evidence="1">Pyridoxal 5'-phosphate synthase glutaminase subunit</fullName>
        <ecNumber evidence="1">3.5.1.2</ecNumber>
    </alternativeName>
</protein>
<sequence>MVKIGVLGLQGAVREHVKSVEASGAEAVVVKRIEQLEEIDGLILPGGESTTMRRLIDKYDFMEPLRTFAKSGKPMFGTCAGMILLAKTLIGYDEAHIGAMDITVERNAFGRQKDSFEAALSIKGVGEDFVGVFIRAPYVVDVADDVEVLSTHGDRMVAVKQGPFLAASFHPELTDDHRVTAYFVEMVKEAKMKKVV</sequence>
<name>PDXT_BACAC</name>
<evidence type="ECO:0000255" key="1">
    <source>
        <dbReference type="HAMAP-Rule" id="MF_01615"/>
    </source>
</evidence>
<comment type="function">
    <text evidence="1">Catalyzes the hydrolysis of glutamine to glutamate and ammonia as part of the biosynthesis of pyridoxal 5'-phosphate. The resulting ammonia molecule is channeled to the active site of PdxS.</text>
</comment>
<comment type="catalytic activity">
    <reaction evidence="1">
        <text>aldehydo-D-ribose 5-phosphate + D-glyceraldehyde 3-phosphate + L-glutamine = pyridoxal 5'-phosphate + L-glutamate + phosphate + 3 H2O + H(+)</text>
        <dbReference type="Rhea" id="RHEA:31507"/>
        <dbReference type="ChEBI" id="CHEBI:15377"/>
        <dbReference type="ChEBI" id="CHEBI:15378"/>
        <dbReference type="ChEBI" id="CHEBI:29985"/>
        <dbReference type="ChEBI" id="CHEBI:43474"/>
        <dbReference type="ChEBI" id="CHEBI:58273"/>
        <dbReference type="ChEBI" id="CHEBI:58359"/>
        <dbReference type="ChEBI" id="CHEBI:59776"/>
        <dbReference type="ChEBI" id="CHEBI:597326"/>
        <dbReference type="EC" id="4.3.3.6"/>
    </reaction>
</comment>
<comment type="catalytic activity">
    <reaction evidence="1">
        <text>L-glutamine + H2O = L-glutamate + NH4(+)</text>
        <dbReference type="Rhea" id="RHEA:15889"/>
        <dbReference type="ChEBI" id="CHEBI:15377"/>
        <dbReference type="ChEBI" id="CHEBI:28938"/>
        <dbReference type="ChEBI" id="CHEBI:29985"/>
        <dbReference type="ChEBI" id="CHEBI:58359"/>
        <dbReference type="EC" id="3.5.1.2"/>
    </reaction>
</comment>
<comment type="pathway">
    <text evidence="1">Cofactor biosynthesis; pyridoxal 5'-phosphate biosynthesis.</text>
</comment>
<comment type="subunit">
    <text evidence="1">In the presence of PdxS, forms a dodecamer of heterodimers. Only shows activity in the heterodimer.</text>
</comment>
<comment type="similarity">
    <text evidence="1">Belongs to the glutaminase PdxT/SNO family.</text>
</comment>
<proteinExistence type="inferred from homology"/>
<organism>
    <name type="scientific">Bacillus anthracis (strain CDC 684 / NRRL 3495)</name>
    <dbReference type="NCBI Taxonomy" id="568206"/>
    <lineage>
        <taxon>Bacteria</taxon>
        <taxon>Bacillati</taxon>
        <taxon>Bacillota</taxon>
        <taxon>Bacilli</taxon>
        <taxon>Bacillales</taxon>
        <taxon>Bacillaceae</taxon>
        <taxon>Bacillus</taxon>
        <taxon>Bacillus cereus group</taxon>
    </lineage>
</organism>
<feature type="chain" id="PRO_1000185871" description="Pyridoxal 5'-phosphate synthase subunit PdxT">
    <location>
        <begin position="1"/>
        <end position="196"/>
    </location>
</feature>
<feature type="active site" description="Nucleophile" evidence="1">
    <location>
        <position position="79"/>
    </location>
</feature>
<feature type="active site" description="Charge relay system" evidence="1">
    <location>
        <position position="170"/>
    </location>
</feature>
<feature type="active site" description="Charge relay system" evidence="1">
    <location>
        <position position="172"/>
    </location>
</feature>
<feature type="binding site" evidence="1">
    <location>
        <begin position="47"/>
        <end position="49"/>
    </location>
    <ligand>
        <name>L-glutamine</name>
        <dbReference type="ChEBI" id="CHEBI:58359"/>
    </ligand>
</feature>
<feature type="binding site" evidence="1">
    <location>
        <position position="106"/>
    </location>
    <ligand>
        <name>L-glutamine</name>
        <dbReference type="ChEBI" id="CHEBI:58359"/>
    </ligand>
</feature>
<feature type="binding site" evidence="1">
    <location>
        <begin position="134"/>
        <end position="135"/>
    </location>
    <ligand>
        <name>L-glutamine</name>
        <dbReference type="ChEBI" id="CHEBI:58359"/>
    </ligand>
</feature>